<proteinExistence type="inferred from homology"/>
<sequence>MAAPKSAVRKPRRKDKKNIAVGQAHIKSTFNNTIVSITDPTGAVISWASSGVVGYNGSRKSTPFAAQLAAESAARQAQEHGMKKVDVFVKGPGSGRETAIRSLQAAGLEVGSINDVTPQAHNGCRPPKRRRV</sequence>
<protein>
    <recommendedName>
        <fullName evidence="1">Small ribosomal subunit protein uS11</fullName>
    </recommendedName>
    <alternativeName>
        <fullName evidence="3">30S ribosomal protein S11</fullName>
    </alternativeName>
</protein>
<name>RS11_CLASE</name>
<keyword id="KW-0687">Ribonucleoprotein</keyword>
<keyword id="KW-0689">Ribosomal protein</keyword>
<keyword id="KW-0694">RNA-binding</keyword>
<keyword id="KW-0699">rRNA-binding</keyword>
<evidence type="ECO:0000255" key="1">
    <source>
        <dbReference type="HAMAP-Rule" id="MF_01310"/>
    </source>
</evidence>
<evidence type="ECO:0000256" key="2">
    <source>
        <dbReference type="SAM" id="MobiDB-lite"/>
    </source>
</evidence>
<evidence type="ECO:0000305" key="3"/>
<accession>B0RB71</accession>
<feature type="chain" id="PRO_1000086182" description="Small ribosomal subunit protein uS11">
    <location>
        <begin position="1"/>
        <end position="132"/>
    </location>
</feature>
<feature type="region of interest" description="Disordered" evidence="2">
    <location>
        <begin position="1"/>
        <end position="21"/>
    </location>
</feature>
<feature type="compositionally biased region" description="Basic residues" evidence="2">
    <location>
        <begin position="7"/>
        <end position="16"/>
    </location>
</feature>
<dbReference type="EMBL" id="AM849034">
    <property type="protein sequence ID" value="CAQ00436.1"/>
    <property type="molecule type" value="Genomic_DNA"/>
</dbReference>
<dbReference type="RefSeq" id="WP_012039274.1">
    <property type="nucleotide sequence ID" value="NZ_MZMN01000003.1"/>
</dbReference>
<dbReference type="SMR" id="B0RB71"/>
<dbReference type="STRING" id="31964.CMS0315"/>
<dbReference type="GeneID" id="92984297"/>
<dbReference type="KEGG" id="cms:CMS0315"/>
<dbReference type="eggNOG" id="COG0100">
    <property type="taxonomic scope" value="Bacteria"/>
</dbReference>
<dbReference type="HOGENOM" id="CLU_072439_5_0_11"/>
<dbReference type="OrthoDB" id="9806415at2"/>
<dbReference type="Proteomes" id="UP000001318">
    <property type="component" value="Chromosome"/>
</dbReference>
<dbReference type="GO" id="GO:1990904">
    <property type="term" value="C:ribonucleoprotein complex"/>
    <property type="evidence" value="ECO:0007669"/>
    <property type="project" value="UniProtKB-KW"/>
</dbReference>
<dbReference type="GO" id="GO:0005840">
    <property type="term" value="C:ribosome"/>
    <property type="evidence" value="ECO:0007669"/>
    <property type="project" value="UniProtKB-KW"/>
</dbReference>
<dbReference type="GO" id="GO:0019843">
    <property type="term" value="F:rRNA binding"/>
    <property type="evidence" value="ECO:0007669"/>
    <property type="project" value="UniProtKB-UniRule"/>
</dbReference>
<dbReference type="GO" id="GO:0003735">
    <property type="term" value="F:structural constituent of ribosome"/>
    <property type="evidence" value="ECO:0007669"/>
    <property type="project" value="InterPro"/>
</dbReference>
<dbReference type="GO" id="GO:0006412">
    <property type="term" value="P:translation"/>
    <property type="evidence" value="ECO:0007669"/>
    <property type="project" value="UniProtKB-UniRule"/>
</dbReference>
<dbReference type="FunFam" id="3.30.420.80:FF:000001">
    <property type="entry name" value="30S ribosomal protein S11"/>
    <property type="match status" value="1"/>
</dbReference>
<dbReference type="Gene3D" id="3.30.420.80">
    <property type="entry name" value="Ribosomal protein S11"/>
    <property type="match status" value="1"/>
</dbReference>
<dbReference type="HAMAP" id="MF_01310">
    <property type="entry name" value="Ribosomal_uS11"/>
    <property type="match status" value="1"/>
</dbReference>
<dbReference type="InterPro" id="IPR001971">
    <property type="entry name" value="Ribosomal_uS11"/>
</dbReference>
<dbReference type="InterPro" id="IPR019981">
    <property type="entry name" value="Ribosomal_uS11_bac-type"/>
</dbReference>
<dbReference type="InterPro" id="IPR018102">
    <property type="entry name" value="Ribosomal_uS11_CS"/>
</dbReference>
<dbReference type="InterPro" id="IPR036967">
    <property type="entry name" value="Ribosomal_uS11_sf"/>
</dbReference>
<dbReference type="NCBIfam" id="NF003698">
    <property type="entry name" value="PRK05309.1"/>
    <property type="match status" value="1"/>
</dbReference>
<dbReference type="NCBIfam" id="TIGR03632">
    <property type="entry name" value="uS11_bact"/>
    <property type="match status" value="1"/>
</dbReference>
<dbReference type="PANTHER" id="PTHR11759">
    <property type="entry name" value="40S RIBOSOMAL PROTEIN S14/30S RIBOSOMAL PROTEIN S11"/>
    <property type="match status" value="1"/>
</dbReference>
<dbReference type="Pfam" id="PF00411">
    <property type="entry name" value="Ribosomal_S11"/>
    <property type="match status" value="1"/>
</dbReference>
<dbReference type="PIRSF" id="PIRSF002131">
    <property type="entry name" value="Ribosomal_S11"/>
    <property type="match status" value="1"/>
</dbReference>
<dbReference type="SUPFAM" id="SSF53137">
    <property type="entry name" value="Translational machinery components"/>
    <property type="match status" value="1"/>
</dbReference>
<dbReference type="PROSITE" id="PS00054">
    <property type="entry name" value="RIBOSOMAL_S11"/>
    <property type="match status" value="1"/>
</dbReference>
<gene>
    <name evidence="1" type="primary">rpsK</name>
    <name type="ordered locus">CMS0315</name>
</gene>
<reference key="1">
    <citation type="journal article" date="2008" name="J. Bacteriol.">
        <title>Genome of the actinomycete plant pathogen Clavibacter michiganensis subsp. sepedonicus suggests recent niche adaptation.</title>
        <authorList>
            <person name="Bentley S.D."/>
            <person name="Corton C."/>
            <person name="Brown S.E."/>
            <person name="Barron A."/>
            <person name="Clark L."/>
            <person name="Doggett J."/>
            <person name="Harris B."/>
            <person name="Ormond D."/>
            <person name="Quail M.A."/>
            <person name="May G."/>
            <person name="Francis D."/>
            <person name="Knudson D."/>
            <person name="Parkhill J."/>
            <person name="Ishimaru C.A."/>
        </authorList>
    </citation>
    <scope>NUCLEOTIDE SEQUENCE [LARGE SCALE GENOMIC DNA]</scope>
    <source>
        <strain>ATCC 33113 / DSM 20744 / JCM 9667 / LMG 2889 / ICMP 2535 / C-1</strain>
    </source>
</reference>
<organism>
    <name type="scientific">Clavibacter sepedonicus</name>
    <name type="common">Clavibacter michiganensis subsp. sepedonicus</name>
    <dbReference type="NCBI Taxonomy" id="31964"/>
    <lineage>
        <taxon>Bacteria</taxon>
        <taxon>Bacillati</taxon>
        <taxon>Actinomycetota</taxon>
        <taxon>Actinomycetes</taxon>
        <taxon>Micrococcales</taxon>
        <taxon>Microbacteriaceae</taxon>
        <taxon>Clavibacter</taxon>
    </lineage>
</organism>
<comment type="function">
    <text evidence="1">Located on the platform of the 30S subunit, it bridges several disparate RNA helices of the 16S rRNA. Forms part of the Shine-Dalgarno cleft in the 70S ribosome.</text>
</comment>
<comment type="subunit">
    <text evidence="1">Part of the 30S ribosomal subunit. Interacts with proteins S7 and S18. Binds to IF-3.</text>
</comment>
<comment type="similarity">
    <text evidence="1">Belongs to the universal ribosomal protein uS11 family.</text>
</comment>